<evidence type="ECO:0000255" key="1">
    <source>
        <dbReference type="HAMAP-Rule" id="MF_00050"/>
    </source>
</evidence>
<accession>C3MBQ3</accession>
<proteinExistence type="inferred from homology"/>
<keyword id="KW-0963">Cytoplasm</keyword>
<keyword id="KW-0251">Elongation factor</keyword>
<keyword id="KW-0648">Protein biosynthesis</keyword>
<keyword id="KW-1185">Reference proteome</keyword>
<reference key="1">
    <citation type="journal article" date="2009" name="Appl. Environ. Microbiol.">
        <title>Rhizobium sp. strain NGR234 possesses a remarkable number of secretion systems.</title>
        <authorList>
            <person name="Schmeisser C."/>
            <person name="Liesegang H."/>
            <person name="Krysciak D."/>
            <person name="Bakkou N."/>
            <person name="Le Quere A."/>
            <person name="Wollherr A."/>
            <person name="Heinemeyer I."/>
            <person name="Morgenstern B."/>
            <person name="Pommerening-Roeser A."/>
            <person name="Flores M."/>
            <person name="Palacios R."/>
            <person name="Brenner S."/>
            <person name="Gottschalk G."/>
            <person name="Schmitz R.A."/>
            <person name="Broughton W.J."/>
            <person name="Perret X."/>
            <person name="Strittmatter A.W."/>
            <person name="Streit W.R."/>
        </authorList>
    </citation>
    <scope>NUCLEOTIDE SEQUENCE [LARGE SCALE GENOMIC DNA]</scope>
    <source>
        <strain>NBRC 101917 / NGR234</strain>
    </source>
</reference>
<dbReference type="EMBL" id="CP001389">
    <property type="protein sequence ID" value="ACP25115.1"/>
    <property type="molecule type" value="Genomic_DNA"/>
</dbReference>
<dbReference type="RefSeq" id="WP_012707891.1">
    <property type="nucleotide sequence ID" value="NC_012587.1"/>
</dbReference>
<dbReference type="RefSeq" id="YP_002825868.1">
    <property type="nucleotide sequence ID" value="NC_012587.1"/>
</dbReference>
<dbReference type="SMR" id="C3MBQ3"/>
<dbReference type="STRING" id="394.NGR_c13350"/>
<dbReference type="KEGG" id="rhi:NGR_c13350"/>
<dbReference type="PATRIC" id="fig|394.7.peg.4156"/>
<dbReference type="eggNOG" id="COG0264">
    <property type="taxonomic scope" value="Bacteria"/>
</dbReference>
<dbReference type="HOGENOM" id="CLU_047155_2_0_5"/>
<dbReference type="OrthoDB" id="9808348at2"/>
<dbReference type="Proteomes" id="UP000001054">
    <property type="component" value="Chromosome"/>
</dbReference>
<dbReference type="GO" id="GO:0005737">
    <property type="term" value="C:cytoplasm"/>
    <property type="evidence" value="ECO:0007669"/>
    <property type="project" value="UniProtKB-SubCell"/>
</dbReference>
<dbReference type="GO" id="GO:0003746">
    <property type="term" value="F:translation elongation factor activity"/>
    <property type="evidence" value="ECO:0007669"/>
    <property type="project" value="UniProtKB-UniRule"/>
</dbReference>
<dbReference type="CDD" id="cd14275">
    <property type="entry name" value="UBA_EF-Ts"/>
    <property type="match status" value="1"/>
</dbReference>
<dbReference type="FunFam" id="1.10.286.20:FF:000001">
    <property type="entry name" value="Elongation factor Ts"/>
    <property type="match status" value="1"/>
</dbReference>
<dbReference type="FunFam" id="1.10.8.10:FF:000001">
    <property type="entry name" value="Elongation factor Ts"/>
    <property type="match status" value="1"/>
</dbReference>
<dbReference type="Gene3D" id="1.10.286.20">
    <property type="match status" value="1"/>
</dbReference>
<dbReference type="Gene3D" id="1.10.8.10">
    <property type="entry name" value="DNA helicase RuvA subunit, C-terminal domain"/>
    <property type="match status" value="1"/>
</dbReference>
<dbReference type="Gene3D" id="3.30.479.20">
    <property type="entry name" value="Elongation factor Ts, dimerisation domain"/>
    <property type="match status" value="2"/>
</dbReference>
<dbReference type="HAMAP" id="MF_00050">
    <property type="entry name" value="EF_Ts"/>
    <property type="match status" value="1"/>
</dbReference>
<dbReference type="InterPro" id="IPR036402">
    <property type="entry name" value="EF-Ts_dimer_sf"/>
</dbReference>
<dbReference type="InterPro" id="IPR001816">
    <property type="entry name" value="Transl_elong_EFTs/EF1B"/>
</dbReference>
<dbReference type="InterPro" id="IPR014039">
    <property type="entry name" value="Transl_elong_EFTs/EF1B_dimer"/>
</dbReference>
<dbReference type="InterPro" id="IPR018101">
    <property type="entry name" value="Transl_elong_Ts_CS"/>
</dbReference>
<dbReference type="InterPro" id="IPR009060">
    <property type="entry name" value="UBA-like_sf"/>
</dbReference>
<dbReference type="NCBIfam" id="TIGR00116">
    <property type="entry name" value="tsf"/>
    <property type="match status" value="1"/>
</dbReference>
<dbReference type="PANTHER" id="PTHR11741">
    <property type="entry name" value="ELONGATION FACTOR TS"/>
    <property type="match status" value="1"/>
</dbReference>
<dbReference type="PANTHER" id="PTHR11741:SF0">
    <property type="entry name" value="ELONGATION FACTOR TS, MITOCHONDRIAL"/>
    <property type="match status" value="1"/>
</dbReference>
<dbReference type="Pfam" id="PF00889">
    <property type="entry name" value="EF_TS"/>
    <property type="match status" value="1"/>
</dbReference>
<dbReference type="SUPFAM" id="SSF54713">
    <property type="entry name" value="Elongation factor Ts (EF-Ts), dimerisation domain"/>
    <property type="match status" value="2"/>
</dbReference>
<dbReference type="SUPFAM" id="SSF46934">
    <property type="entry name" value="UBA-like"/>
    <property type="match status" value="1"/>
</dbReference>
<dbReference type="PROSITE" id="PS01126">
    <property type="entry name" value="EF_TS_1"/>
    <property type="match status" value="1"/>
</dbReference>
<dbReference type="PROSITE" id="PS01127">
    <property type="entry name" value="EF_TS_2"/>
    <property type="match status" value="1"/>
</dbReference>
<sequence>MTVTAAMVKDLREKTGAGMMDCKKALAETNGDMEAAIDWLRAKGIAKADKKSGRTAAEGLIGIASAGNKAVVVEINSETDFVARNDAFQDLVRGIANVALGTDGTVEAVSQATYPATGKSVEDSVKDAIATIGENMTLRRAAALKVEDGVVATYIHNAAGDGIGKLGVLVALKSTGNKEALNAIGRQVAMHVAATNPLAVRPSEIDPAVAERERNVFIEQSRASGKPDNIIEKMVDGRMRKFFEEVALLSQAFVMNPDQTVEAAIKEAEKTVGAPIEVAGIARLLLGEGVQKEESDFAAEVAAAAKG</sequence>
<gene>
    <name evidence="1" type="primary">tsf</name>
    <name type="ordered locus">NGR_c13350</name>
</gene>
<feature type="chain" id="PRO_1000117596" description="Elongation factor Ts">
    <location>
        <begin position="1"/>
        <end position="307"/>
    </location>
</feature>
<feature type="region of interest" description="Involved in Mg(2+) ion dislocation from EF-Tu" evidence="1">
    <location>
        <begin position="79"/>
        <end position="82"/>
    </location>
</feature>
<name>EFTS_SINFN</name>
<comment type="function">
    <text evidence="1">Associates with the EF-Tu.GDP complex and induces the exchange of GDP to GTP. It remains bound to the aminoacyl-tRNA.EF-Tu.GTP complex up to the GTP hydrolysis stage on the ribosome.</text>
</comment>
<comment type="subcellular location">
    <subcellularLocation>
        <location evidence="1">Cytoplasm</location>
    </subcellularLocation>
</comment>
<comment type="similarity">
    <text evidence="1">Belongs to the EF-Ts family.</text>
</comment>
<protein>
    <recommendedName>
        <fullName evidence="1">Elongation factor Ts</fullName>
        <shortName evidence="1">EF-Ts</shortName>
    </recommendedName>
</protein>
<organism>
    <name type="scientific">Sinorhizobium fredii (strain NBRC 101917 / NGR234)</name>
    <dbReference type="NCBI Taxonomy" id="394"/>
    <lineage>
        <taxon>Bacteria</taxon>
        <taxon>Pseudomonadati</taxon>
        <taxon>Pseudomonadota</taxon>
        <taxon>Alphaproteobacteria</taxon>
        <taxon>Hyphomicrobiales</taxon>
        <taxon>Rhizobiaceae</taxon>
        <taxon>Sinorhizobium/Ensifer group</taxon>
        <taxon>Sinorhizobium</taxon>
    </lineage>
</organism>